<protein>
    <recommendedName>
        <fullName>Uncharacterized protein MPN_440</fullName>
    </recommendedName>
</protein>
<gene>
    <name type="ordered locus">MPN_440</name>
    <name type="ORF">H08_orf102</name>
    <name type="ORF">MP401</name>
</gene>
<keyword id="KW-1185">Reference proteome</keyword>
<accession>P75338</accession>
<organism>
    <name type="scientific">Mycoplasma pneumoniae (strain ATCC 29342 / M129 / Subtype 1)</name>
    <name type="common">Mycoplasmoides pneumoniae</name>
    <dbReference type="NCBI Taxonomy" id="272634"/>
    <lineage>
        <taxon>Bacteria</taxon>
        <taxon>Bacillati</taxon>
        <taxon>Mycoplasmatota</taxon>
        <taxon>Mycoplasmoidales</taxon>
        <taxon>Mycoplasmoidaceae</taxon>
        <taxon>Mycoplasmoides</taxon>
    </lineage>
</organism>
<evidence type="ECO:0000305" key="1"/>
<proteinExistence type="inferred from homology"/>
<comment type="similarity">
    <text evidence="1">Belongs to the MG307/MG309/MG338 family.</text>
</comment>
<dbReference type="EMBL" id="U00089">
    <property type="protein sequence ID" value="AAB96049.1"/>
    <property type="molecule type" value="Genomic_DNA"/>
</dbReference>
<dbReference type="PIR" id="S73727">
    <property type="entry name" value="S73727"/>
</dbReference>
<dbReference type="RefSeq" id="NP_110128.1">
    <property type="nucleotide sequence ID" value="NC_000912.1"/>
</dbReference>
<dbReference type="RefSeq" id="WP_010874796.1">
    <property type="nucleotide sequence ID" value="NZ_OU342337.1"/>
</dbReference>
<dbReference type="SMR" id="P75338"/>
<dbReference type="IntAct" id="P75338">
    <property type="interactions" value="1"/>
</dbReference>
<dbReference type="EnsemblBacteria" id="AAB96049">
    <property type="protein sequence ID" value="AAB96049"/>
    <property type="gene ID" value="MPN_440"/>
</dbReference>
<dbReference type="KEGG" id="mpn:MPN_440"/>
<dbReference type="PATRIC" id="fig|272634.6.peg.476"/>
<dbReference type="HOGENOM" id="CLU_007912_1_0_14"/>
<dbReference type="BioCyc" id="MPNE272634:G1GJ3-710-MONOMER"/>
<dbReference type="Proteomes" id="UP000000808">
    <property type="component" value="Chromosome"/>
</dbReference>
<dbReference type="InterPro" id="IPR022186">
    <property type="entry name" value="DUF3713"/>
</dbReference>
<dbReference type="Pfam" id="PF12506">
    <property type="entry name" value="DUF3713"/>
    <property type="match status" value="1"/>
</dbReference>
<sequence length="726" mass="80934">MQQQGETKDQYNTFGLRLVRNSVGVSVLGLDGFVKFIKGGSGGSNGGSSSAKKIDKEEQKKFLKFRAFQAKIGTFYNTNFAFSFPLNETLKGWFDKHRGLILANALVKVTLDTKEKASKALVDAFSSYKNWLSEYTPVGLATTMISFYFDQMKALNNKLLERVRSLNQNVNQANPTPWLNGLSAKLPYVNTNGNYEKLNNYFTFLITKVLWPKVGTEDTNVSEEKSKLKTKTEDVNKIREKILNNIDSKLKTFVQKLKPTLAPRPAYSNVILLNINNDKVWSAGANWSLAVLLDPKKVNPLSFMLLKQMFDQNSLFKKAKTLFENIQNKAKTSGSGKSGTTTNDDADALSKVIGNYYYNTWAKLTDKSIYGNLKDDKFDDLFKLAFDSSINEKSFNVDYKAVIEHYRFIYTLEWLVDKNLKNFKDLLKANLKFGEIAFIAYKNTETQNFSNPQGIFGSYFNYENETNAAKSATQIIDPNSFFYKTTTKPEAKTTQSANTAVMVQNTQMNNQQTNSYGFTGLSTSSGSMLGAATQQAILDQITKTSLQQYGSQADLKKIIGETKNQLLLDRIANQLIALKPNTSGNSGTQKTIAAYFQTDAVGNPTLDFKAKQKLLLDVLDQYKDFFGNNAQAVQRDSGKSGTGNYLTYTDGSDKITYLQFSYKDIDGLSLSSSNGTSSKFASDVVAALLLFQAAYKGTQQLALSSINKPQLPIGDKRIKTGIDLLK</sequence>
<feature type="chain" id="PRO_0000210677" description="Uncharacterized protein MPN_440">
    <location>
        <begin position="1"/>
        <end position="726"/>
    </location>
</feature>
<name>Y440_MYCPN</name>
<reference key="1">
    <citation type="journal article" date="1996" name="Nucleic Acids Res.">
        <title>Complete sequence analysis of the genome of the bacterium Mycoplasma pneumoniae.</title>
        <authorList>
            <person name="Himmelreich R."/>
            <person name="Hilbert H."/>
            <person name="Plagens H."/>
            <person name="Pirkl E."/>
            <person name="Li B.-C."/>
            <person name="Herrmann R."/>
        </authorList>
    </citation>
    <scope>NUCLEOTIDE SEQUENCE [LARGE SCALE GENOMIC DNA]</scope>
    <source>
        <strain>ATCC 29342 / M129 / Subtype 1</strain>
    </source>
</reference>